<comment type="function">
    <text evidence="1">May be involved in DNA replication and thus regulate cell proliferation.</text>
</comment>
<comment type="subunit">
    <text evidence="1">Heterotetramer of subunits RFC2, RFC3, RFC4 and RFC5 that can form a complex with RFC1.</text>
</comment>
<comment type="subcellular location">
    <subcellularLocation>
        <location evidence="1">Nucleus</location>
    </subcellularLocation>
</comment>
<comment type="tissue specificity">
    <text evidence="5">Expressed in roots, leaves, shoot apical meristem (SAM), flag leaves and panicles.</text>
</comment>
<comment type="induction">
    <text evidence="5">Down-regulated by sucrose starvation.</text>
</comment>
<comment type="similarity">
    <text evidence="6">Belongs to the activator 1 large subunit family.</text>
</comment>
<name>RFC1_ORYSJ</name>
<reference key="1">
    <citation type="journal article" date="2003" name="Plant Mol. Biol.">
        <title>Characterization of all the subunits of replication factor C from a higher plant, rice (Oryza sativa L.), and their relation to development.</title>
        <authorList>
            <person name="Furukawa T."/>
            <person name="Ishibashi T."/>
            <person name="Kimura S."/>
            <person name="Tanaka H."/>
            <person name="Hashimoto J."/>
            <person name="Sakaguchi K."/>
        </authorList>
    </citation>
    <scope>NUCLEOTIDE SEQUENCE [MRNA]</scope>
    <scope>TISSUE SPECIFICITY</scope>
    <scope>INDUCTION</scope>
    <scope>GENE FAMILY</scope>
    <source>
        <strain>cv. Nipponbare</strain>
    </source>
</reference>
<reference key="2">
    <citation type="journal article" date="2005" name="BMC Biol.">
        <title>The sequence of rice chromosomes 11 and 12, rich in disease resistance genes and recent gene duplications.</title>
        <authorList>
            <consortium name="The rice chromosomes 11 and 12 sequencing consortia"/>
        </authorList>
    </citation>
    <scope>NUCLEOTIDE SEQUENCE [LARGE SCALE GENOMIC DNA]</scope>
    <source>
        <strain>cv. Nipponbare</strain>
    </source>
</reference>
<reference key="3">
    <citation type="journal article" date="2005" name="Nature">
        <title>The map-based sequence of the rice genome.</title>
        <authorList>
            <consortium name="International rice genome sequencing project (IRGSP)"/>
        </authorList>
    </citation>
    <scope>NUCLEOTIDE SEQUENCE [LARGE SCALE GENOMIC DNA]</scope>
    <source>
        <strain>cv. Nipponbare</strain>
    </source>
</reference>
<reference key="4">
    <citation type="journal article" date="2008" name="Nucleic Acids Res.">
        <title>The rice annotation project database (RAP-DB): 2008 update.</title>
        <authorList>
            <consortium name="The rice annotation project (RAP)"/>
        </authorList>
    </citation>
    <scope>GENOME REANNOTATION</scope>
    <source>
        <strain>cv. Nipponbare</strain>
    </source>
</reference>
<reference key="5">
    <citation type="journal article" date="2013" name="Rice">
        <title>Improvement of the Oryza sativa Nipponbare reference genome using next generation sequence and optical map data.</title>
        <authorList>
            <person name="Kawahara Y."/>
            <person name="de la Bastide M."/>
            <person name="Hamilton J.P."/>
            <person name="Kanamori H."/>
            <person name="McCombie W.R."/>
            <person name="Ouyang S."/>
            <person name="Schwartz D.C."/>
            <person name="Tanaka T."/>
            <person name="Wu J."/>
            <person name="Zhou S."/>
            <person name="Childs K.L."/>
            <person name="Davidson R.M."/>
            <person name="Lin H."/>
            <person name="Quesada-Ocampo L."/>
            <person name="Vaillancourt B."/>
            <person name="Sakai H."/>
            <person name="Lee S.S."/>
            <person name="Kim J."/>
            <person name="Numa H."/>
            <person name="Itoh T."/>
            <person name="Buell C.R."/>
            <person name="Matsumoto T."/>
        </authorList>
    </citation>
    <scope>GENOME REANNOTATION</scope>
    <source>
        <strain>cv. Nipponbare</strain>
    </source>
</reference>
<reference key="6">
    <citation type="journal article" date="2003" name="Science">
        <title>Collection, mapping, and annotation of over 28,000 cDNA clones from japonica rice.</title>
        <authorList>
            <consortium name="The rice full-length cDNA consortium"/>
        </authorList>
    </citation>
    <scope>NUCLEOTIDE SEQUENCE [LARGE SCALE MRNA]</scope>
    <source>
        <strain>cv. Nipponbare</strain>
    </source>
</reference>
<protein>
    <recommendedName>
        <fullName>Replication factor C subunit 1</fullName>
        <shortName>OsRFC1</shortName>
    </recommendedName>
    <alternativeName>
        <fullName>Activator 1 large subunit</fullName>
    </alternativeName>
    <alternativeName>
        <fullName>Activator 1 subunit 1</fullName>
    </alternativeName>
</protein>
<proteinExistence type="evidence at transcript level"/>
<sequence length="1021" mass="110900">MSSDIRKWFMKAQDKNGGAAKPAGTTALAKKPVLSIPEKPSAAPSMAACDQDCSARRKTSKYFASKTEKEEDTSAGKGTGRGLPKRKLQKVSDELEDDMKPLPAKEVHKEEEDDDDDDFVAPSKRKTPVKPPPSKKLKGASTAEAHGKTGLDDDNEDKMDEDAKTPSKASGSGRGRGRGRGRGGRGAGAAHGKTIGLDDDGEEDKMDEDAKTPSKAAGRGRGGASGGRGRGGGGRGFMNFGERKDPPHKGEKEVPEGAPDCLTGLTFVISGTLDSLEREEATDLIKRYGGRVTGSISKKTNYLLADEDVGGVKSNKAKELGVPFLTEDGLFDMIRKSKPAKATVAKHQSDKNSEKQQKSPMKSSPVKVERRDGNQITTGKNISPKSNKGSASIDNQKVNIVDRGSLQWTEKYRPKVPNDIVGNQSMVKQLHDWLRSWEDQFLHSGQKGKGKKQADSGAKKAVLLSGPPGIGKTTTAKVVSQMLGLQAIEVNASDSRGKADSKIEKGVGGSTSNSIKELISNATLNYSNNRLKRPKAVLVMDEVDGMSAGDRGGVADLIASIKMSKIPIICICNDRYSQKLKSLVNYCLLLNFRKPTKQQMGKRLMEIAKKEGLQAQENAMEELAERVHGDIRMALNHLQYMSLSQSVVKYDDIRQRLNSSTKDEDISPFTAVDKLFGFNGGRLRMDERIDLSMSDPDLVPLIIQENYINYRPITVGKDDSGVKRMNFLARAAESIADADIVNVQIRRYRQWQLSQAACLSSSIVPAALMHGNREILEAGERNFNRFGGWLGKYSTTNKNIRLLEDAHSHILASQQANLDRESLRLDYLTLLLRQLTDPLKTMPKDEAVQKVVEFMDTYSLSQEDFDTIVELSKFKGHPNPMDGIQPAVKSALTKAYKQGSSSRVVRAADLVNIPGMKKPLKKRVAAILEPVGESLPEENGVASSEGDEEDSSDAENNDELVPGDTKPKLDLQSDKKKGIQVQLDLKSNGNGLNSKKMPAGRSKASGSAGKAAGGSGGKRKR</sequence>
<keyword id="KW-0067">ATP-binding</keyword>
<keyword id="KW-0235">DNA replication</keyword>
<keyword id="KW-0547">Nucleotide-binding</keyword>
<keyword id="KW-0539">Nucleus</keyword>
<keyword id="KW-1185">Reference proteome</keyword>
<accession>Q2R2B4</accession>
<accession>A0A0P0Y3I3</accession>
<accession>Q84N08</accession>
<evidence type="ECO:0000250" key="1"/>
<evidence type="ECO:0000255" key="2"/>
<evidence type="ECO:0000255" key="3">
    <source>
        <dbReference type="PROSITE-ProRule" id="PRU00033"/>
    </source>
</evidence>
<evidence type="ECO:0000256" key="4">
    <source>
        <dbReference type="SAM" id="MobiDB-lite"/>
    </source>
</evidence>
<evidence type="ECO:0000269" key="5">
    <source>
    </source>
</evidence>
<evidence type="ECO:0000305" key="6"/>
<gene>
    <name type="primary">RFC1</name>
    <name type="ordered locus">Os11g0572100</name>
    <name type="ordered locus">LOC_Os11g36390</name>
</gene>
<organism>
    <name type="scientific">Oryza sativa subsp. japonica</name>
    <name type="common">Rice</name>
    <dbReference type="NCBI Taxonomy" id="39947"/>
    <lineage>
        <taxon>Eukaryota</taxon>
        <taxon>Viridiplantae</taxon>
        <taxon>Streptophyta</taxon>
        <taxon>Embryophyta</taxon>
        <taxon>Tracheophyta</taxon>
        <taxon>Spermatophyta</taxon>
        <taxon>Magnoliopsida</taxon>
        <taxon>Liliopsida</taxon>
        <taxon>Poales</taxon>
        <taxon>Poaceae</taxon>
        <taxon>BOP clade</taxon>
        <taxon>Oryzoideae</taxon>
        <taxon>Oryzeae</taxon>
        <taxon>Oryzinae</taxon>
        <taxon>Oryza</taxon>
        <taxon>Oryza sativa</taxon>
    </lineage>
</organism>
<dbReference type="EMBL" id="AB109200">
    <property type="protein sequence ID" value="BAC76085.1"/>
    <property type="molecule type" value="mRNA"/>
</dbReference>
<dbReference type="EMBL" id="DP000010">
    <property type="protein sequence ID" value="ABA94349.2"/>
    <property type="molecule type" value="Genomic_DNA"/>
</dbReference>
<dbReference type="EMBL" id="AP008217">
    <property type="protein sequence ID" value="BAF28486.1"/>
    <property type="molecule type" value="Genomic_DNA"/>
</dbReference>
<dbReference type="EMBL" id="AP014967">
    <property type="protein sequence ID" value="BAT14532.1"/>
    <property type="molecule type" value="Genomic_DNA"/>
</dbReference>
<dbReference type="EMBL" id="AK070564">
    <property type="protein sequence ID" value="BAG92033.1"/>
    <property type="molecule type" value="mRNA"/>
</dbReference>
<dbReference type="RefSeq" id="XP_015617630.1">
    <property type="nucleotide sequence ID" value="XM_015762144.1"/>
</dbReference>
<dbReference type="SMR" id="Q2R2B4"/>
<dbReference type="FunCoup" id="Q2R2B4">
    <property type="interactions" value="2234"/>
</dbReference>
<dbReference type="STRING" id="39947.Q2R2B4"/>
<dbReference type="iPTMnet" id="Q2R2B4"/>
<dbReference type="PaxDb" id="39947-Q2R2B4"/>
<dbReference type="EnsemblPlants" id="Os11t0572100-01">
    <property type="protein sequence ID" value="Os11t0572100-01"/>
    <property type="gene ID" value="Os11g0572100"/>
</dbReference>
<dbReference type="EnsemblPlants" id="Os11t0572100-02">
    <property type="protein sequence ID" value="Os11t0572100-02"/>
    <property type="gene ID" value="Os11g0572100"/>
</dbReference>
<dbReference type="Gramene" id="Os11t0572100-01">
    <property type="protein sequence ID" value="Os11t0572100-01"/>
    <property type="gene ID" value="Os11g0572100"/>
</dbReference>
<dbReference type="Gramene" id="Os11t0572100-02">
    <property type="protein sequence ID" value="Os11t0572100-02"/>
    <property type="gene ID" value="Os11g0572100"/>
</dbReference>
<dbReference type="KEGG" id="dosa:Os11g0572100"/>
<dbReference type="eggNOG" id="KOG1968">
    <property type="taxonomic scope" value="Eukaryota"/>
</dbReference>
<dbReference type="HOGENOM" id="CLU_003574_4_0_1"/>
<dbReference type="InParanoid" id="Q2R2B4"/>
<dbReference type="OMA" id="LICNERN"/>
<dbReference type="OrthoDB" id="446168at2759"/>
<dbReference type="PlantReactome" id="R-OSA-9675815">
    <property type="pathway name" value="Leading strand synthesis"/>
</dbReference>
<dbReference type="Proteomes" id="UP000000763">
    <property type="component" value="Chromosome 11"/>
</dbReference>
<dbReference type="Proteomes" id="UP000059680">
    <property type="component" value="Chromosome 11"/>
</dbReference>
<dbReference type="ExpressionAtlas" id="Q2R2B4">
    <property type="expression patterns" value="baseline and differential"/>
</dbReference>
<dbReference type="GO" id="GO:0005663">
    <property type="term" value="C:DNA replication factor C complex"/>
    <property type="evidence" value="ECO:0007669"/>
    <property type="project" value="InterPro"/>
</dbReference>
<dbReference type="GO" id="GO:0005634">
    <property type="term" value="C:nucleus"/>
    <property type="evidence" value="ECO:0000318"/>
    <property type="project" value="GO_Central"/>
</dbReference>
<dbReference type="GO" id="GO:0005524">
    <property type="term" value="F:ATP binding"/>
    <property type="evidence" value="ECO:0007669"/>
    <property type="project" value="UniProtKB-KW"/>
</dbReference>
<dbReference type="GO" id="GO:0016887">
    <property type="term" value="F:ATP hydrolysis activity"/>
    <property type="evidence" value="ECO:0007669"/>
    <property type="project" value="InterPro"/>
</dbReference>
<dbReference type="GO" id="GO:0003677">
    <property type="term" value="F:DNA binding"/>
    <property type="evidence" value="ECO:0000318"/>
    <property type="project" value="GO_Central"/>
</dbReference>
<dbReference type="GO" id="GO:0003689">
    <property type="term" value="F:DNA clamp loader activity"/>
    <property type="evidence" value="ECO:0007669"/>
    <property type="project" value="InterPro"/>
</dbReference>
<dbReference type="GO" id="GO:0006281">
    <property type="term" value="P:DNA repair"/>
    <property type="evidence" value="ECO:0007669"/>
    <property type="project" value="InterPro"/>
</dbReference>
<dbReference type="GO" id="GO:0006260">
    <property type="term" value="P:DNA replication"/>
    <property type="evidence" value="ECO:0007669"/>
    <property type="project" value="UniProtKB-KW"/>
</dbReference>
<dbReference type="GO" id="GO:0000712">
    <property type="term" value="P:resolution of meiotic recombination intermediates"/>
    <property type="evidence" value="ECO:0007669"/>
    <property type="project" value="EnsemblPlants"/>
</dbReference>
<dbReference type="CDD" id="cd00009">
    <property type="entry name" value="AAA"/>
    <property type="match status" value="1"/>
</dbReference>
<dbReference type="CDD" id="cd17752">
    <property type="entry name" value="BRCT_RFC1"/>
    <property type="match status" value="1"/>
</dbReference>
<dbReference type="CDD" id="cd18140">
    <property type="entry name" value="HLD_clamp_RFC"/>
    <property type="match status" value="1"/>
</dbReference>
<dbReference type="FunFam" id="1.10.8.60:FF:000021">
    <property type="entry name" value="Replication factor C subunit 1"/>
    <property type="match status" value="1"/>
</dbReference>
<dbReference type="FunFam" id="1.20.272.10:FF:000013">
    <property type="entry name" value="Replication factor C subunit 1"/>
    <property type="match status" value="1"/>
</dbReference>
<dbReference type="FunFam" id="3.40.50.10190:FF:000001">
    <property type="entry name" value="Replication factor C subunit 1"/>
    <property type="match status" value="1"/>
</dbReference>
<dbReference type="FunFam" id="3.40.50.300:FF:000773">
    <property type="entry name" value="Replication factor C subunit 1"/>
    <property type="match status" value="1"/>
</dbReference>
<dbReference type="Gene3D" id="1.10.8.60">
    <property type="match status" value="1"/>
</dbReference>
<dbReference type="Gene3D" id="1.20.272.10">
    <property type="match status" value="1"/>
</dbReference>
<dbReference type="Gene3D" id="3.40.50.10190">
    <property type="entry name" value="BRCT domain"/>
    <property type="match status" value="1"/>
</dbReference>
<dbReference type="Gene3D" id="3.40.50.300">
    <property type="entry name" value="P-loop containing nucleotide triphosphate hydrolases"/>
    <property type="match status" value="1"/>
</dbReference>
<dbReference type="InterPro" id="IPR003593">
    <property type="entry name" value="AAA+_ATPase"/>
</dbReference>
<dbReference type="InterPro" id="IPR003959">
    <property type="entry name" value="ATPase_AAA_core"/>
</dbReference>
<dbReference type="InterPro" id="IPR001357">
    <property type="entry name" value="BRCT_dom"/>
</dbReference>
<dbReference type="InterPro" id="IPR036420">
    <property type="entry name" value="BRCT_dom_sf"/>
</dbReference>
<dbReference type="InterPro" id="IPR008921">
    <property type="entry name" value="DNA_pol3_clamp-load_cplx_C"/>
</dbReference>
<dbReference type="InterPro" id="IPR013725">
    <property type="entry name" value="DNA_replication_fac_RFC1_C"/>
</dbReference>
<dbReference type="InterPro" id="IPR027417">
    <property type="entry name" value="P-loop_NTPase"/>
</dbReference>
<dbReference type="InterPro" id="IPR012178">
    <property type="entry name" value="RFC1"/>
</dbReference>
<dbReference type="InterPro" id="IPR047854">
    <property type="entry name" value="RFC_lid"/>
</dbReference>
<dbReference type="PANTHER" id="PTHR23389">
    <property type="entry name" value="CHROMOSOME TRANSMISSION FIDELITY FACTOR 18"/>
    <property type="match status" value="1"/>
</dbReference>
<dbReference type="PANTHER" id="PTHR23389:SF6">
    <property type="entry name" value="REPLICATION FACTOR C SUBUNIT 1"/>
    <property type="match status" value="1"/>
</dbReference>
<dbReference type="Pfam" id="PF00004">
    <property type="entry name" value="AAA"/>
    <property type="match status" value="1"/>
</dbReference>
<dbReference type="Pfam" id="PF25361">
    <property type="entry name" value="AAA_lid_RFC1"/>
    <property type="match status" value="1"/>
</dbReference>
<dbReference type="Pfam" id="PF00533">
    <property type="entry name" value="BRCT"/>
    <property type="match status" value="1"/>
</dbReference>
<dbReference type="Pfam" id="PF08519">
    <property type="entry name" value="RFC1"/>
    <property type="match status" value="1"/>
</dbReference>
<dbReference type="PIRSF" id="PIRSF036578">
    <property type="entry name" value="RFC1"/>
    <property type="match status" value="1"/>
</dbReference>
<dbReference type="SMART" id="SM00382">
    <property type="entry name" value="AAA"/>
    <property type="match status" value="1"/>
</dbReference>
<dbReference type="SMART" id="SM00292">
    <property type="entry name" value="BRCT"/>
    <property type="match status" value="1"/>
</dbReference>
<dbReference type="SUPFAM" id="SSF52113">
    <property type="entry name" value="BRCT domain"/>
    <property type="match status" value="1"/>
</dbReference>
<dbReference type="SUPFAM" id="SSF52540">
    <property type="entry name" value="P-loop containing nucleoside triphosphate hydrolases"/>
    <property type="match status" value="1"/>
</dbReference>
<dbReference type="SUPFAM" id="SSF48019">
    <property type="entry name" value="post-AAA+ oligomerization domain-like"/>
    <property type="match status" value="1"/>
</dbReference>
<dbReference type="PROSITE" id="PS50172">
    <property type="entry name" value="BRCT"/>
    <property type="match status" value="1"/>
</dbReference>
<feature type="chain" id="PRO_0000422634" description="Replication factor C subunit 1">
    <location>
        <begin position="1"/>
        <end position="1021"/>
    </location>
</feature>
<feature type="domain" description="BRCT" evidence="3">
    <location>
        <begin position="257"/>
        <end position="347"/>
    </location>
</feature>
<feature type="region of interest" description="Disordered" evidence="4">
    <location>
        <begin position="1"/>
        <end position="259"/>
    </location>
</feature>
<feature type="region of interest" description="Disordered" evidence="4">
    <location>
        <begin position="339"/>
        <end position="392"/>
    </location>
</feature>
<feature type="region of interest" description="Disordered" evidence="4">
    <location>
        <begin position="931"/>
        <end position="1021"/>
    </location>
</feature>
<feature type="compositionally biased region" description="Basic and acidic residues" evidence="4">
    <location>
        <begin position="90"/>
        <end position="110"/>
    </location>
</feature>
<feature type="compositionally biased region" description="Basic residues" evidence="4">
    <location>
        <begin position="123"/>
        <end position="138"/>
    </location>
</feature>
<feature type="compositionally biased region" description="Acidic residues" evidence="4">
    <location>
        <begin position="197"/>
        <end position="207"/>
    </location>
</feature>
<feature type="compositionally biased region" description="Gly residues" evidence="4">
    <location>
        <begin position="219"/>
        <end position="236"/>
    </location>
</feature>
<feature type="compositionally biased region" description="Basic and acidic residues" evidence="4">
    <location>
        <begin position="241"/>
        <end position="255"/>
    </location>
</feature>
<feature type="compositionally biased region" description="Basic and acidic residues" evidence="4">
    <location>
        <begin position="347"/>
        <end position="357"/>
    </location>
</feature>
<feature type="compositionally biased region" description="Polar residues" evidence="4">
    <location>
        <begin position="374"/>
        <end position="392"/>
    </location>
</feature>
<feature type="compositionally biased region" description="Acidic residues" evidence="4">
    <location>
        <begin position="945"/>
        <end position="958"/>
    </location>
</feature>
<feature type="compositionally biased region" description="Basic and acidic residues" evidence="4">
    <location>
        <begin position="965"/>
        <end position="977"/>
    </location>
</feature>
<feature type="compositionally biased region" description="Low complexity" evidence="4">
    <location>
        <begin position="999"/>
        <end position="1010"/>
    </location>
</feature>
<feature type="compositionally biased region" description="Gly residues" evidence="4">
    <location>
        <begin position="1011"/>
        <end position="1021"/>
    </location>
</feature>
<feature type="binding site" evidence="2">
    <location>
        <begin position="465"/>
        <end position="472"/>
    </location>
    <ligand>
        <name>ATP</name>
        <dbReference type="ChEBI" id="CHEBI:30616"/>
    </ligand>
</feature>
<feature type="sequence conflict" description="In Ref. 1; BAC76085." evidence="6" ref="1">
    <original>R</original>
    <variation>K</variation>
    <location>
        <position position="435"/>
    </location>
</feature>